<proteinExistence type="evidence at protein level"/>
<comment type="function">
    <text evidence="1">Acts as a component of the MCM2-7 complex (MCM complex) which is the replicative helicase essential for 'once per cell cycle' DNA replication initiation and elongation in eukaryotic cells. Core component of CDC45-MCM-GINS (CMG) helicase, the molecular machine that unwinds template DNA during replication, and around which the replisome is built. The active ATPase sites in the MCM2-7 ring are formed through the interaction surfaces of two neighboring subunits such that a critical structure of a conserved arginine finger motif is provided in trans relative to the ATP-binding site of the Walker A box of the adjacent subunit. The six ATPase active sites, however, are likely to contribute differentially to the complex helicase activity.</text>
</comment>
<comment type="catalytic activity">
    <reaction evidence="1">
        <text>ATP + H2O = ADP + phosphate + H(+)</text>
        <dbReference type="Rhea" id="RHEA:13065"/>
        <dbReference type="ChEBI" id="CHEBI:15377"/>
        <dbReference type="ChEBI" id="CHEBI:15378"/>
        <dbReference type="ChEBI" id="CHEBI:30616"/>
        <dbReference type="ChEBI" id="CHEBI:43474"/>
        <dbReference type="ChEBI" id="CHEBI:456216"/>
        <dbReference type="EC" id="3.6.4.12"/>
    </reaction>
    <physiologicalReaction direction="left-to-right" evidence="1">
        <dbReference type="Rhea" id="RHEA:13066"/>
    </physiologicalReaction>
</comment>
<comment type="subunit">
    <text evidence="2 3 4 5 6 7 8">Component of the mcm2-7 complex (RLF-M) (PubMed:16369567, PubMed:8917078, PubMed:9214646, PubMed:9214647, PubMed:9851868). The complex forms a toroidal hexameric ring with the proposed subunit order mcm2-mcm6-mcm4-mcm7-mcm3-mcm5 (PubMed:16369567, PubMed:8917078, PubMed:9214646, PubMed:9214647, PubMed:9851868). The heterodimer of mmcm3/mcm5 interacts with mcm4, mmcm6, mcm7 and weakly with mcm2 (PubMed:16369567, PubMed:8917078, PubMed:9214646, PubMed:9214647, PubMed:9851868). Component of the CMG helicase complex, composed of the mcm2-7 complex, the GINS complex and cdc45 (PubMed:30842657, PubMed:30979826).</text>
</comment>
<comment type="interaction">
    <interactant intactId="EBI-876879">
        <id>P55862</id>
    </interactant>
    <interactant intactId="EBI-491720">
        <id>P49739</id>
        <label>mmcm3</label>
    </interactant>
    <organismsDiffer>false</organismsDiffer>
    <experiments>5</experiments>
</comment>
<comment type="subcellular location">
    <subcellularLocation>
        <location evidence="6 7">Nucleus</location>
    </subcellularLocation>
    <subcellularLocation>
        <location evidence="6 7">Chromosome</location>
    </subcellularLocation>
    <text evidence="6 7">Associated with chromatin before the formation of nuclei and detaches from it as DNA replication progresses.</text>
</comment>
<comment type="similarity">
    <text evidence="9">Belongs to the MCM family.</text>
</comment>
<name>MCM5A_XENLA</name>
<keyword id="KW-0002">3D-structure</keyword>
<keyword id="KW-0067">ATP-binding</keyword>
<keyword id="KW-0131">Cell cycle</keyword>
<keyword id="KW-0158">Chromosome</keyword>
<keyword id="KW-0235">DNA replication</keyword>
<keyword id="KW-0238">DNA-binding</keyword>
<keyword id="KW-0347">Helicase</keyword>
<keyword id="KW-0378">Hydrolase</keyword>
<keyword id="KW-0547">Nucleotide-binding</keyword>
<keyword id="KW-0539">Nucleus</keyword>
<keyword id="KW-1185">Reference proteome</keyword>
<accession>P55862</accession>
<accession>Q5D0A3</accession>
<evidence type="ECO:0000250" key="1">
    <source>
        <dbReference type="UniProtKB" id="P33992"/>
    </source>
</evidence>
<evidence type="ECO:0000269" key="2">
    <source>
    </source>
</evidence>
<evidence type="ECO:0000269" key="3">
    <source>
    </source>
</evidence>
<evidence type="ECO:0000269" key="4">
    <source>
    </source>
</evidence>
<evidence type="ECO:0000269" key="5">
    <source>
    </source>
</evidence>
<evidence type="ECO:0000269" key="6">
    <source>
    </source>
</evidence>
<evidence type="ECO:0000269" key="7">
    <source>
    </source>
</evidence>
<evidence type="ECO:0000269" key="8">
    <source>
    </source>
</evidence>
<evidence type="ECO:0000305" key="9"/>
<evidence type="ECO:0000305" key="10">
    <source>
    </source>
</evidence>
<evidence type="ECO:0007829" key="11">
    <source>
        <dbReference type="PDB" id="8Q6O"/>
    </source>
</evidence>
<sequence length="735" mass="82435">MSGFDDLGVYYSDSFGGEQQVGDDGQAKKSQLKKRFREFLRQYRIGTDRTGFTFKYRDELKRHYNLGEYWIEVEMEDLASFDEDLADYLYKQPTEHLQLLEEAAQEVADEVTRPRPAGEETIQEIQVMLRSDANPANIRSLKSEQMSHLVKIPGIIIAATAVRAKATKISIQCRSCRNTIGNIAVRPGLEGYAMPRKCNTEQAGRPNCPLDPYFIIPDKCKCVDFQTLKLQESPDAVPHGELPRHMQLYCDRYLCDKVVPGNRVTIMGIYSIRKSGKTSTKGRDRVGVGIRSSYIRVVGIQVDTEGTGRSAAGAITPQEEEEFRRLAAKPDIYETVAKSIAPSIYGSSDIKKAIACLLFGGSRKRLPDGLTRRGDVNLLMLGDPGTAKSQLLKFVERCSPIGVYTSGKGSSAAGLTASVMRDPVSRNFIMEGGAMVLADGGVVCIDEFDKMREDDRVAIHEAMEQQTISIAKAGITTTLNSRCSVLAAANSVYGRWDDTKGEENIDFMPTILSRFDMIFIVKDEHNEQRDMTLAKHVMNVHLSARTQSSSVEGEVDLNTLKKYIAYCRAKCGPRLSAEAAEKLKNRYILMRSGAREHERETEKRSSIPITVRQLEAIVRISESLGKMKLQPFATETDVEEALRLFQVSTLDAAMSGSLSGVEGFTTQEDQEMLSRIEKQMKKRFAIGSQVSEHSIIQDFLKQKYPEHAIHKVLSLMMRRGEIQHRLQRKVLYRIK</sequence>
<feature type="chain" id="PRO_0000194109" description="DNA replication licensing factor mcm5-A">
    <location>
        <begin position="1"/>
        <end position="735"/>
    </location>
</feature>
<feature type="domain" description="MCM">
    <location>
        <begin position="332"/>
        <end position="538"/>
    </location>
</feature>
<feature type="short sequence motif" description="Arginine finger">
    <location>
        <begin position="513"/>
        <end position="516"/>
    </location>
</feature>
<feature type="binding site" evidence="1">
    <location>
        <position position="372"/>
    </location>
    <ligand>
        <name>ADP</name>
        <dbReference type="ChEBI" id="CHEBI:456216"/>
        <note>ligand shared with MCM3</note>
    </ligand>
</feature>
<feature type="helix" evidence="11">
    <location>
        <begin position="28"/>
        <end position="42"/>
    </location>
</feature>
<feature type="strand" evidence="11">
    <location>
        <begin position="44"/>
        <end position="46"/>
    </location>
</feature>
<feature type="turn" evidence="11">
    <location>
        <begin position="48"/>
        <end position="50"/>
    </location>
</feature>
<feature type="strand" evidence="11">
    <location>
        <begin position="53"/>
        <end position="55"/>
    </location>
</feature>
<feature type="helix" evidence="11">
    <location>
        <begin position="56"/>
        <end position="66"/>
    </location>
</feature>
<feature type="strand" evidence="11">
    <location>
        <begin position="70"/>
        <end position="74"/>
    </location>
</feature>
<feature type="helix" evidence="11">
    <location>
        <begin position="75"/>
        <end position="81"/>
    </location>
</feature>
<feature type="helix" evidence="11">
    <location>
        <begin position="83"/>
        <end position="87"/>
    </location>
</feature>
<feature type="turn" evidence="11">
    <location>
        <begin position="88"/>
        <end position="91"/>
    </location>
</feature>
<feature type="helix" evidence="11">
    <location>
        <begin position="93"/>
        <end position="111"/>
    </location>
</feature>
<feature type="strand" evidence="11">
    <location>
        <begin position="126"/>
        <end position="130"/>
    </location>
</feature>
<feature type="helix" evidence="11">
    <location>
        <begin position="138"/>
        <end position="140"/>
    </location>
</feature>
<feature type="strand" evidence="11">
    <location>
        <begin position="143"/>
        <end position="159"/>
    </location>
</feature>
<feature type="strand" evidence="11">
    <location>
        <begin position="163"/>
        <end position="176"/>
    </location>
</feature>
<feature type="strand" evidence="11">
    <location>
        <begin position="179"/>
        <end position="184"/>
    </location>
</feature>
<feature type="strand" evidence="11">
    <location>
        <begin position="187"/>
        <end position="189"/>
    </location>
</feature>
<feature type="strand" evidence="11">
    <location>
        <begin position="213"/>
        <end position="231"/>
    </location>
</feature>
<feature type="turn" evidence="11">
    <location>
        <begin position="234"/>
        <end position="236"/>
    </location>
</feature>
<feature type="strand" evidence="11">
    <location>
        <begin position="245"/>
        <end position="251"/>
    </location>
</feature>
<feature type="helix" evidence="11">
    <location>
        <begin position="252"/>
        <end position="254"/>
    </location>
</feature>
<feature type="strand" evidence="11">
    <location>
        <begin position="263"/>
        <end position="272"/>
    </location>
</feature>
<feature type="strand" evidence="11">
    <location>
        <begin position="293"/>
        <end position="302"/>
    </location>
</feature>
<dbReference type="EC" id="3.6.4.12"/>
<dbReference type="EMBL" id="U44048">
    <property type="protein sequence ID" value="AAC60224.1"/>
    <property type="molecule type" value="mRNA"/>
</dbReference>
<dbReference type="EMBL" id="D63920">
    <property type="protein sequence ID" value="BAA09949.1"/>
    <property type="molecule type" value="mRNA"/>
</dbReference>
<dbReference type="EMBL" id="BC047250">
    <property type="protein sequence ID" value="AAH47250.1"/>
    <property type="molecule type" value="mRNA"/>
</dbReference>
<dbReference type="PIR" id="T47224">
    <property type="entry name" value="PC4225"/>
</dbReference>
<dbReference type="RefSeq" id="NP_001080893.1">
    <property type="nucleotide sequence ID" value="NM_001087424.1"/>
</dbReference>
<dbReference type="PDB" id="8Q6O">
    <property type="method" value="EM"/>
    <property type="resolution" value="3.14 A"/>
    <property type="chains" value="5/D=1-735"/>
</dbReference>
<dbReference type="PDB" id="8Q6P">
    <property type="method" value="EM"/>
    <property type="resolution" value="3.53 A"/>
    <property type="chains" value="5=1-735"/>
</dbReference>
<dbReference type="PDBsum" id="8Q6O"/>
<dbReference type="PDBsum" id="8Q6P"/>
<dbReference type="EMDB" id="EMD-18191"/>
<dbReference type="EMDB" id="EMD-18192"/>
<dbReference type="EMDB" id="EMD-18195"/>
<dbReference type="SMR" id="P55862"/>
<dbReference type="BioGRID" id="98829">
    <property type="interactions" value="4"/>
</dbReference>
<dbReference type="ComplexPortal" id="CPX-2943">
    <property type="entry name" value="MCM complex"/>
</dbReference>
<dbReference type="IntAct" id="P55862">
    <property type="interactions" value="6"/>
</dbReference>
<dbReference type="MINT" id="P55862"/>
<dbReference type="DNASU" id="380587"/>
<dbReference type="GeneID" id="380587"/>
<dbReference type="KEGG" id="xla:380587"/>
<dbReference type="AGR" id="Xenbase:XB-GENE-6256510"/>
<dbReference type="CTD" id="380587"/>
<dbReference type="Xenbase" id="XB-GENE-6256510">
    <property type="gene designation" value="mcm5.L"/>
</dbReference>
<dbReference type="OMA" id="ITYCKTR"/>
<dbReference type="OrthoDB" id="10036721at2759"/>
<dbReference type="Proteomes" id="UP000186698">
    <property type="component" value="Chromosome 4L"/>
</dbReference>
<dbReference type="Bgee" id="380587">
    <property type="expression patterns" value="Expressed in neurula embryo and 18 other cell types or tissues"/>
</dbReference>
<dbReference type="GO" id="GO:0000785">
    <property type="term" value="C:chromatin"/>
    <property type="evidence" value="ECO:0000314"/>
    <property type="project" value="UniProtKB"/>
</dbReference>
<dbReference type="GO" id="GO:0071162">
    <property type="term" value="C:CMG complex"/>
    <property type="evidence" value="ECO:0000314"/>
    <property type="project" value="UniProtKB"/>
</dbReference>
<dbReference type="GO" id="GO:0042555">
    <property type="term" value="C:MCM complex"/>
    <property type="evidence" value="ECO:0000314"/>
    <property type="project" value="UniProtKB"/>
</dbReference>
<dbReference type="GO" id="GO:0005634">
    <property type="term" value="C:nucleus"/>
    <property type="evidence" value="ECO:0000318"/>
    <property type="project" value="GO_Central"/>
</dbReference>
<dbReference type="GO" id="GO:0043138">
    <property type="term" value="F:3'-5' DNA helicase activity"/>
    <property type="evidence" value="ECO:0007669"/>
    <property type="project" value="TreeGrafter"/>
</dbReference>
<dbReference type="GO" id="GO:0005524">
    <property type="term" value="F:ATP binding"/>
    <property type="evidence" value="ECO:0007669"/>
    <property type="project" value="UniProtKB-KW"/>
</dbReference>
<dbReference type="GO" id="GO:0016887">
    <property type="term" value="F:ATP hydrolysis activity"/>
    <property type="evidence" value="ECO:0007669"/>
    <property type="project" value="RHEA"/>
</dbReference>
<dbReference type="GO" id="GO:0003688">
    <property type="term" value="F:DNA replication origin binding"/>
    <property type="evidence" value="ECO:0007669"/>
    <property type="project" value="InterPro"/>
</dbReference>
<dbReference type="GO" id="GO:0003697">
    <property type="term" value="F:single-stranded DNA binding"/>
    <property type="evidence" value="ECO:0000318"/>
    <property type="project" value="GO_Central"/>
</dbReference>
<dbReference type="GO" id="GO:0017116">
    <property type="term" value="F:single-stranded DNA helicase activity"/>
    <property type="evidence" value="ECO:0007669"/>
    <property type="project" value="TreeGrafter"/>
</dbReference>
<dbReference type="GO" id="GO:0044786">
    <property type="term" value="P:cell cycle DNA replication"/>
    <property type="evidence" value="ECO:0000314"/>
    <property type="project" value="UniProtKB"/>
</dbReference>
<dbReference type="GO" id="GO:0006270">
    <property type="term" value="P:DNA replication initiation"/>
    <property type="evidence" value="ECO:0000318"/>
    <property type="project" value="GO_Central"/>
</dbReference>
<dbReference type="GO" id="GO:0000727">
    <property type="term" value="P:double-strand break repair via break-induced replication"/>
    <property type="evidence" value="ECO:0000318"/>
    <property type="project" value="GO_Central"/>
</dbReference>
<dbReference type="GO" id="GO:0006279">
    <property type="term" value="P:premeiotic DNA replication"/>
    <property type="evidence" value="ECO:0000314"/>
    <property type="project" value="ComplexPortal"/>
</dbReference>
<dbReference type="GO" id="GO:0030174">
    <property type="term" value="P:regulation of DNA-templated DNA replication initiation"/>
    <property type="evidence" value="ECO:0000314"/>
    <property type="project" value="UniProtKB"/>
</dbReference>
<dbReference type="CDD" id="cd17756">
    <property type="entry name" value="MCM5"/>
    <property type="match status" value="1"/>
</dbReference>
<dbReference type="FunFam" id="2.20.28.10:FF:000005">
    <property type="entry name" value="DNA helicase"/>
    <property type="match status" value="1"/>
</dbReference>
<dbReference type="FunFam" id="3.30.1640.10:FF:000006">
    <property type="entry name" value="DNA helicase"/>
    <property type="match status" value="1"/>
</dbReference>
<dbReference type="FunFam" id="3.40.50.300:FF:000241">
    <property type="entry name" value="DNA helicase"/>
    <property type="match status" value="1"/>
</dbReference>
<dbReference type="Gene3D" id="2.20.28.10">
    <property type="match status" value="1"/>
</dbReference>
<dbReference type="Gene3D" id="3.30.1640.10">
    <property type="entry name" value="mini-chromosome maintenance (MCM) complex, chain A, domain 1"/>
    <property type="match status" value="1"/>
</dbReference>
<dbReference type="Gene3D" id="2.40.50.140">
    <property type="entry name" value="Nucleic acid-binding proteins"/>
    <property type="match status" value="1"/>
</dbReference>
<dbReference type="Gene3D" id="3.40.50.300">
    <property type="entry name" value="P-loop containing nucleotide triphosphate hydrolases"/>
    <property type="match status" value="1"/>
</dbReference>
<dbReference type="InterPro" id="IPR031327">
    <property type="entry name" value="MCM"/>
</dbReference>
<dbReference type="InterPro" id="IPR008048">
    <property type="entry name" value="MCM5"/>
</dbReference>
<dbReference type="InterPro" id="IPR054125">
    <property type="entry name" value="MCM5_C"/>
</dbReference>
<dbReference type="InterPro" id="IPR018525">
    <property type="entry name" value="MCM_CS"/>
</dbReference>
<dbReference type="InterPro" id="IPR001208">
    <property type="entry name" value="MCM_dom"/>
</dbReference>
<dbReference type="InterPro" id="IPR041562">
    <property type="entry name" value="MCM_lid"/>
</dbReference>
<dbReference type="InterPro" id="IPR027925">
    <property type="entry name" value="MCM_N"/>
</dbReference>
<dbReference type="InterPro" id="IPR033762">
    <property type="entry name" value="MCM_OB"/>
</dbReference>
<dbReference type="InterPro" id="IPR012340">
    <property type="entry name" value="NA-bd_OB-fold"/>
</dbReference>
<dbReference type="InterPro" id="IPR027417">
    <property type="entry name" value="P-loop_NTPase"/>
</dbReference>
<dbReference type="PANTHER" id="PTHR11630">
    <property type="entry name" value="DNA REPLICATION LICENSING FACTOR MCM FAMILY MEMBER"/>
    <property type="match status" value="1"/>
</dbReference>
<dbReference type="PANTHER" id="PTHR11630:SF42">
    <property type="entry name" value="DNA REPLICATION LICENSING FACTOR MCM5"/>
    <property type="match status" value="1"/>
</dbReference>
<dbReference type="Pfam" id="PF00493">
    <property type="entry name" value="MCM"/>
    <property type="match status" value="1"/>
</dbReference>
<dbReference type="Pfam" id="PF21933">
    <property type="entry name" value="MCM5_C"/>
    <property type="match status" value="1"/>
</dbReference>
<dbReference type="Pfam" id="PF17855">
    <property type="entry name" value="MCM_lid"/>
    <property type="match status" value="1"/>
</dbReference>
<dbReference type="Pfam" id="PF14551">
    <property type="entry name" value="MCM_N"/>
    <property type="match status" value="1"/>
</dbReference>
<dbReference type="Pfam" id="PF17207">
    <property type="entry name" value="MCM_OB"/>
    <property type="match status" value="1"/>
</dbReference>
<dbReference type="PRINTS" id="PR01657">
    <property type="entry name" value="MCMFAMILY"/>
</dbReference>
<dbReference type="PRINTS" id="PR01661">
    <property type="entry name" value="MCMPROTEIN5"/>
</dbReference>
<dbReference type="SMART" id="SM00350">
    <property type="entry name" value="MCM"/>
    <property type="match status" value="1"/>
</dbReference>
<dbReference type="SUPFAM" id="SSF50249">
    <property type="entry name" value="Nucleic acid-binding proteins"/>
    <property type="match status" value="1"/>
</dbReference>
<dbReference type="SUPFAM" id="SSF52540">
    <property type="entry name" value="P-loop containing nucleoside triphosphate hydrolases"/>
    <property type="match status" value="1"/>
</dbReference>
<dbReference type="PROSITE" id="PS00847">
    <property type="entry name" value="MCM_1"/>
    <property type="match status" value="1"/>
</dbReference>
<dbReference type="PROSITE" id="PS50051">
    <property type="entry name" value="MCM_2"/>
    <property type="match status" value="1"/>
</dbReference>
<gene>
    <name type="primary">mcm5-a</name>
    <name type="synonym">cdc46-a</name>
</gene>
<reference key="1">
    <citation type="journal article" date="1997" name="EMBO J.">
        <title>Licensing of DNA replication by a multi-protein complex of MCM/P1 proteins in Xenopus eggs.</title>
        <authorList>
            <person name="Kubota Y."/>
            <person name="Mimura S."/>
            <person name="Nishimoto S."/>
            <person name="Masuda T."/>
            <person name="Nojima H."/>
            <person name="Takisawa H."/>
        </authorList>
    </citation>
    <scope>NUCLEOTIDE SEQUENCE [MRNA]</scope>
    <scope>FUNCTION</scope>
    <scope>IDENTIFICATION IN A COMPLEX WITH MCM2; MMCM3; MCM4; MMCM6 AND MCM7</scope>
    <scope>SUBCELLULAR LOCATION</scope>
    <source>
        <tissue>Oocyte</tissue>
    </source>
</reference>
<reference key="2">
    <citation type="submission" date="2003-02" db="EMBL/GenBank/DDBJ databases">
        <authorList>
            <consortium name="NIH - Xenopus Gene Collection (XGC) project"/>
        </authorList>
    </citation>
    <scope>NUCLEOTIDE SEQUENCE [LARGE SCALE MRNA]</scope>
    <source>
        <tissue>Embryo</tissue>
    </source>
</reference>
<reference key="3">
    <citation type="journal article" date="1996" name="Gene">
        <title>Identification of two Xenopus laevis genes, xMCM2 and xCDC46, with sequence homology to MCM genes involved in DNA replication.</title>
        <authorList>
            <person name="Miyake S."/>
            <person name="Saito I."/>
            <person name="Kobayashi H."/>
            <person name="Yamashita S."/>
        </authorList>
    </citation>
    <scope>NUCLEOTIDE SEQUENCE [MRNA] OF 20-735</scope>
    <scope>IDENTIFICATION IN A COMPLEX WITH MCM2</scope>
    <source>
        <tissue>Oocyte</tissue>
    </source>
</reference>
<reference key="4">
    <citation type="journal article" date="1997" name="EMBO J.">
        <title>The RLF-M component of the replication licensing system forms complexes containing all six MCM/P1 polypeptides.</title>
        <authorList>
            <person name="Thommes P."/>
            <person name="Kubota Y."/>
            <person name="Takisawa H."/>
            <person name="Blow J.J."/>
        </authorList>
    </citation>
    <scope>FUNCTION</scope>
    <scope>IDENTIFICATION IN RLF-M COMPLEX</scope>
    <scope>SUBCELLULAR LOCATION</scope>
</reference>
<reference key="5">
    <citation type="journal article" date="1998" name="Exp. Cell Res.">
        <title>Evidence for different MCM subcomplexes with differential binding to chromatin in Xenopus.</title>
        <authorList>
            <person name="Coue M."/>
            <person name="Amariglio F."/>
            <person name="Maiorano D."/>
            <person name="Bocquet S."/>
            <person name="Mechali M."/>
        </authorList>
    </citation>
    <scope>IDENTIFICATION IN MCM COMPLEXES</scope>
</reference>
<reference key="6">
    <citation type="journal article" date="2005" name="EMBO J.">
        <title>The ATPase activity of MCM2-7 is dispensable for pre-RC assembly but is required for DNA unwinding.</title>
        <authorList>
            <person name="Ying C.Y."/>
            <person name="Gautier J."/>
        </authorList>
    </citation>
    <scope>FUNCTION</scope>
    <scope>IDENTIFICATION IN A COMPLEX WITH MCM2; MMCM3; MCM4; MMCM6 AND MCM7</scope>
</reference>
<reference key="7">
    <citation type="journal article" date="2019" name="Life. Sci Alliance">
        <title>Mitotic replisome disassembly depends on TRAIP ubiquitin ligase activity.</title>
        <authorList>
            <person name="Priego Moreno S."/>
            <person name="Jones R.M."/>
            <person name="Poovathumkadavil D."/>
            <person name="Scaramuzza S."/>
            <person name="Gambus A."/>
        </authorList>
    </citation>
    <scope>IDENTIFICATION IN THE CMG HELICASE COMPLEX</scope>
</reference>
<reference key="8">
    <citation type="journal article" date="2019" name="Nature">
        <title>TRAIP is a master regulator of DNA interstrand crosslink repair.</title>
        <authorList>
            <person name="Wu R.A."/>
            <person name="Semlow D.R."/>
            <person name="Kamimae-Lanning A.N."/>
            <person name="Kochenova O.V."/>
            <person name="Chistol G."/>
            <person name="Hodskinson M.R."/>
            <person name="Amunugama R."/>
            <person name="Sparks J.L."/>
            <person name="Wang M."/>
            <person name="Deng L."/>
            <person name="Mimoso C.A."/>
            <person name="Low E."/>
            <person name="Patel K.J."/>
            <person name="Walter J.C."/>
        </authorList>
    </citation>
    <scope>IDENTIFICATION IN THE CMG HELICASE COMPLEX</scope>
</reference>
<organism>
    <name type="scientific">Xenopus laevis</name>
    <name type="common">African clawed frog</name>
    <dbReference type="NCBI Taxonomy" id="8355"/>
    <lineage>
        <taxon>Eukaryota</taxon>
        <taxon>Metazoa</taxon>
        <taxon>Chordata</taxon>
        <taxon>Craniata</taxon>
        <taxon>Vertebrata</taxon>
        <taxon>Euteleostomi</taxon>
        <taxon>Amphibia</taxon>
        <taxon>Batrachia</taxon>
        <taxon>Anura</taxon>
        <taxon>Pipoidea</taxon>
        <taxon>Pipidae</taxon>
        <taxon>Xenopodinae</taxon>
        <taxon>Xenopus</taxon>
        <taxon>Xenopus</taxon>
    </lineage>
</organism>
<protein>
    <recommendedName>
        <fullName evidence="9">DNA replication licensing factor mcm5-A</fullName>
        <shortName>xMCM5-A</shortName>
        <ecNumber>3.6.4.12</ecNumber>
    </recommendedName>
    <alternativeName>
        <fullName>CDC46 homolog A</fullName>
        <shortName evidence="10">xCDC46-A</shortName>
    </alternativeName>
    <alternativeName>
        <fullName>CDC46p</fullName>
    </alternativeName>
    <alternativeName>
        <fullName>p92</fullName>
    </alternativeName>
</protein>